<dbReference type="EC" id="2.7.7.3" evidence="1"/>
<dbReference type="EMBL" id="CP000038">
    <property type="protein sequence ID" value="AAZ90316.1"/>
    <property type="molecule type" value="Genomic_DNA"/>
</dbReference>
<dbReference type="RefSeq" id="WP_001171869.1">
    <property type="nucleotide sequence ID" value="NC_007384.1"/>
</dbReference>
<dbReference type="SMR" id="Q3YVZ6"/>
<dbReference type="GeneID" id="93778347"/>
<dbReference type="KEGG" id="ssn:SSON_3773"/>
<dbReference type="HOGENOM" id="CLU_100149_0_1_6"/>
<dbReference type="UniPathway" id="UPA00241">
    <property type="reaction ID" value="UER00355"/>
</dbReference>
<dbReference type="Proteomes" id="UP000002529">
    <property type="component" value="Chromosome"/>
</dbReference>
<dbReference type="GO" id="GO:0005737">
    <property type="term" value="C:cytoplasm"/>
    <property type="evidence" value="ECO:0007669"/>
    <property type="project" value="UniProtKB-SubCell"/>
</dbReference>
<dbReference type="GO" id="GO:0005524">
    <property type="term" value="F:ATP binding"/>
    <property type="evidence" value="ECO:0007669"/>
    <property type="project" value="UniProtKB-KW"/>
</dbReference>
<dbReference type="GO" id="GO:0004595">
    <property type="term" value="F:pantetheine-phosphate adenylyltransferase activity"/>
    <property type="evidence" value="ECO:0007669"/>
    <property type="project" value="UniProtKB-UniRule"/>
</dbReference>
<dbReference type="GO" id="GO:0015937">
    <property type="term" value="P:coenzyme A biosynthetic process"/>
    <property type="evidence" value="ECO:0007669"/>
    <property type="project" value="UniProtKB-UniRule"/>
</dbReference>
<dbReference type="CDD" id="cd02163">
    <property type="entry name" value="PPAT"/>
    <property type="match status" value="1"/>
</dbReference>
<dbReference type="FunFam" id="3.40.50.620:FF:000012">
    <property type="entry name" value="Phosphopantetheine adenylyltransferase"/>
    <property type="match status" value="1"/>
</dbReference>
<dbReference type="Gene3D" id="3.40.50.620">
    <property type="entry name" value="HUPs"/>
    <property type="match status" value="1"/>
</dbReference>
<dbReference type="HAMAP" id="MF_00151">
    <property type="entry name" value="PPAT_bact"/>
    <property type="match status" value="1"/>
</dbReference>
<dbReference type="InterPro" id="IPR004821">
    <property type="entry name" value="Cyt_trans-like"/>
</dbReference>
<dbReference type="InterPro" id="IPR001980">
    <property type="entry name" value="PPAT"/>
</dbReference>
<dbReference type="InterPro" id="IPR014729">
    <property type="entry name" value="Rossmann-like_a/b/a_fold"/>
</dbReference>
<dbReference type="NCBIfam" id="TIGR01510">
    <property type="entry name" value="coaD_prev_kdtB"/>
    <property type="match status" value="1"/>
</dbReference>
<dbReference type="NCBIfam" id="TIGR00125">
    <property type="entry name" value="cyt_tran_rel"/>
    <property type="match status" value="1"/>
</dbReference>
<dbReference type="PANTHER" id="PTHR21342">
    <property type="entry name" value="PHOSPHOPANTETHEINE ADENYLYLTRANSFERASE"/>
    <property type="match status" value="1"/>
</dbReference>
<dbReference type="PANTHER" id="PTHR21342:SF1">
    <property type="entry name" value="PHOSPHOPANTETHEINE ADENYLYLTRANSFERASE"/>
    <property type="match status" value="1"/>
</dbReference>
<dbReference type="Pfam" id="PF01467">
    <property type="entry name" value="CTP_transf_like"/>
    <property type="match status" value="1"/>
</dbReference>
<dbReference type="PRINTS" id="PR01020">
    <property type="entry name" value="LPSBIOSNTHSS"/>
</dbReference>
<dbReference type="SUPFAM" id="SSF52374">
    <property type="entry name" value="Nucleotidylyl transferase"/>
    <property type="match status" value="1"/>
</dbReference>
<protein>
    <recommendedName>
        <fullName evidence="1">Phosphopantetheine adenylyltransferase</fullName>
        <ecNumber evidence="1">2.7.7.3</ecNumber>
    </recommendedName>
    <alternativeName>
        <fullName evidence="1">Dephospho-CoA pyrophosphorylase</fullName>
    </alternativeName>
    <alternativeName>
        <fullName evidence="1">Pantetheine-phosphate adenylyltransferase</fullName>
        <shortName evidence="1">PPAT</shortName>
    </alternativeName>
</protein>
<comment type="function">
    <text evidence="1">Reversibly transfers an adenylyl group from ATP to 4'-phosphopantetheine, yielding dephospho-CoA (dPCoA) and pyrophosphate.</text>
</comment>
<comment type="catalytic activity">
    <reaction evidence="1">
        <text>(R)-4'-phosphopantetheine + ATP + H(+) = 3'-dephospho-CoA + diphosphate</text>
        <dbReference type="Rhea" id="RHEA:19801"/>
        <dbReference type="ChEBI" id="CHEBI:15378"/>
        <dbReference type="ChEBI" id="CHEBI:30616"/>
        <dbReference type="ChEBI" id="CHEBI:33019"/>
        <dbReference type="ChEBI" id="CHEBI:57328"/>
        <dbReference type="ChEBI" id="CHEBI:61723"/>
        <dbReference type="EC" id="2.7.7.3"/>
    </reaction>
</comment>
<comment type="cofactor">
    <cofactor evidence="1">
        <name>Mg(2+)</name>
        <dbReference type="ChEBI" id="CHEBI:18420"/>
    </cofactor>
</comment>
<comment type="pathway">
    <text evidence="1">Cofactor biosynthesis; coenzyme A biosynthesis; CoA from (R)-pantothenate: step 4/5.</text>
</comment>
<comment type="subunit">
    <text evidence="1">Homohexamer.</text>
</comment>
<comment type="subcellular location">
    <subcellularLocation>
        <location evidence="1">Cytoplasm</location>
    </subcellularLocation>
</comment>
<comment type="similarity">
    <text evidence="1">Belongs to the bacterial CoaD family.</text>
</comment>
<feature type="chain" id="PRO_1000011241" description="Phosphopantetheine adenylyltransferase">
    <location>
        <begin position="1"/>
        <end position="159"/>
    </location>
</feature>
<feature type="binding site" evidence="1">
    <location>
        <begin position="10"/>
        <end position="11"/>
    </location>
    <ligand>
        <name>ATP</name>
        <dbReference type="ChEBI" id="CHEBI:30616"/>
    </ligand>
</feature>
<feature type="binding site" evidence="1">
    <location>
        <position position="10"/>
    </location>
    <ligand>
        <name>substrate</name>
    </ligand>
</feature>
<feature type="binding site" evidence="1">
    <location>
        <position position="18"/>
    </location>
    <ligand>
        <name>ATP</name>
        <dbReference type="ChEBI" id="CHEBI:30616"/>
    </ligand>
</feature>
<feature type="binding site" evidence="1">
    <location>
        <position position="42"/>
    </location>
    <ligand>
        <name>substrate</name>
    </ligand>
</feature>
<feature type="binding site" evidence="1">
    <location>
        <position position="74"/>
    </location>
    <ligand>
        <name>substrate</name>
    </ligand>
</feature>
<feature type="binding site" evidence="1">
    <location>
        <position position="88"/>
    </location>
    <ligand>
        <name>substrate</name>
    </ligand>
</feature>
<feature type="binding site" evidence="1">
    <location>
        <begin position="89"/>
        <end position="91"/>
    </location>
    <ligand>
        <name>ATP</name>
        <dbReference type="ChEBI" id="CHEBI:30616"/>
    </ligand>
</feature>
<feature type="binding site" evidence="1">
    <location>
        <position position="99"/>
    </location>
    <ligand>
        <name>ATP</name>
        <dbReference type="ChEBI" id="CHEBI:30616"/>
    </ligand>
</feature>
<feature type="binding site" evidence="1">
    <location>
        <begin position="124"/>
        <end position="130"/>
    </location>
    <ligand>
        <name>ATP</name>
        <dbReference type="ChEBI" id="CHEBI:30616"/>
    </ligand>
</feature>
<feature type="site" description="Transition state stabilizer" evidence="1">
    <location>
        <position position="18"/>
    </location>
</feature>
<organism>
    <name type="scientific">Shigella sonnei (strain Ss046)</name>
    <dbReference type="NCBI Taxonomy" id="300269"/>
    <lineage>
        <taxon>Bacteria</taxon>
        <taxon>Pseudomonadati</taxon>
        <taxon>Pseudomonadota</taxon>
        <taxon>Gammaproteobacteria</taxon>
        <taxon>Enterobacterales</taxon>
        <taxon>Enterobacteriaceae</taxon>
        <taxon>Shigella</taxon>
    </lineage>
</organism>
<name>COAD_SHISS</name>
<reference key="1">
    <citation type="journal article" date="2005" name="Nucleic Acids Res.">
        <title>Genome dynamics and diversity of Shigella species, the etiologic agents of bacillary dysentery.</title>
        <authorList>
            <person name="Yang F."/>
            <person name="Yang J."/>
            <person name="Zhang X."/>
            <person name="Chen L."/>
            <person name="Jiang Y."/>
            <person name="Yan Y."/>
            <person name="Tang X."/>
            <person name="Wang J."/>
            <person name="Xiong Z."/>
            <person name="Dong J."/>
            <person name="Xue Y."/>
            <person name="Zhu Y."/>
            <person name="Xu X."/>
            <person name="Sun L."/>
            <person name="Chen S."/>
            <person name="Nie H."/>
            <person name="Peng J."/>
            <person name="Xu J."/>
            <person name="Wang Y."/>
            <person name="Yuan Z."/>
            <person name="Wen Y."/>
            <person name="Yao Z."/>
            <person name="Shen Y."/>
            <person name="Qiang B."/>
            <person name="Hou Y."/>
            <person name="Yu J."/>
            <person name="Jin Q."/>
        </authorList>
    </citation>
    <scope>NUCLEOTIDE SEQUENCE [LARGE SCALE GENOMIC DNA]</scope>
    <source>
        <strain>Ss046</strain>
    </source>
</reference>
<sequence length="159" mass="17835">MQKRAIYPGTFDPITNGHIDIVTRATQMFDHVILAIAASPSKKPMFTLEERVALTQQATAHLGNVEVVGFSDLMANFARNQHATVLIRGLRAVADFEYEMQLAHMNRHLMPELESVFLMPSKEWSFISSSLVKEVARHQGDVTHFLPENVHQALVAKLA</sequence>
<accession>Q3YVZ6</accession>
<gene>
    <name evidence="1" type="primary">coaD</name>
    <name type="ordered locus">SSON_3773</name>
</gene>
<evidence type="ECO:0000255" key="1">
    <source>
        <dbReference type="HAMAP-Rule" id="MF_00151"/>
    </source>
</evidence>
<keyword id="KW-0067">ATP-binding</keyword>
<keyword id="KW-0173">Coenzyme A biosynthesis</keyword>
<keyword id="KW-0963">Cytoplasm</keyword>
<keyword id="KW-0460">Magnesium</keyword>
<keyword id="KW-0547">Nucleotide-binding</keyword>
<keyword id="KW-0548">Nucleotidyltransferase</keyword>
<keyword id="KW-1185">Reference proteome</keyword>
<keyword id="KW-0808">Transferase</keyword>
<proteinExistence type="inferred from homology"/>